<accession>Q08084</accession>
<name>NU6M_ALBTU</name>
<geneLocation type="mitochondrion"/>
<evidence type="ECO:0000250" key="1"/>
<evidence type="ECO:0000255" key="2"/>
<evidence type="ECO:0000305" key="3"/>
<proteinExistence type="inferred from homology"/>
<gene>
    <name type="primary">ND6</name>
</gene>
<dbReference type="EC" id="7.1.1.2"/>
<dbReference type="EMBL" id="X71394">
    <property type="protein sequence ID" value="CAA50516.1"/>
    <property type="molecule type" value="Genomic_DNA"/>
</dbReference>
<dbReference type="PIR" id="S33145">
    <property type="entry name" value="S33145"/>
</dbReference>
<dbReference type="SMR" id="Q08084"/>
<dbReference type="GO" id="GO:0031966">
    <property type="term" value="C:mitochondrial membrane"/>
    <property type="evidence" value="ECO:0007669"/>
    <property type="project" value="UniProtKB-SubCell"/>
</dbReference>
<dbReference type="GO" id="GO:0008137">
    <property type="term" value="F:NADH dehydrogenase (ubiquinone) activity"/>
    <property type="evidence" value="ECO:0007669"/>
    <property type="project" value="UniProtKB-EC"/>
</dbReference>
<organism>
    <name type="scientific">Albinaria turrita</name>
    <name type="common">Door snail</name>
    <name type="synonym">Clausilia turrita</name>
    <dbReference type="NCBI Taxonomy" id="27820"/>
    <lineage>
        <taxon>Eukaryota</taxon>
        <taxon>Metazoa</taxon>
        <taxon>Spiralia</taxon>
        <taxon>Lophotrochozoa</taxon>
        <taxon>Mollusca</taxon>
        <taxon>Gastropoda</taxon>
        <taxon>Heterobranchia</taxon>
        <taxon>Euthyneura</taxon>
        <taxon>Panpulmonata</taxon>
        <taxon>Eupulmonata</taxon>
        <taxon>Stylommatophora</taxon>
        <taxon>Helicina</taxon>
        <taxon>Clausilioidea</taxon>
        <taxon>Clausiliidae</taxon>
        <taxon>Alopiinae</taxon>
        <taxon>Albinaria</taxon>
    </lineage>
</organism>
<keyword id="KW-0249">Electron transport</keyword>
<keyword id="KW-0472">Membrane</keyword>
<keyword id="KW-0496">Mitochondrion</keyword>
<keyword id="KW-0520">NAD</keyword>
<keyword id="KW-0679">Respiratory chain</keyword>
<keyword id="KW-1278">Translocase</keyword>
<keyword id="KW-0812">Transmembrane</keyword>
<keyword id="KW-1133">Transmembrane helix</keyword>
<keyword id="KW-0813">Transport</keyword>
<keyword id="KW-0830">Ubiquinone</keyword>
<sequence>MMSLSFMLGLIFPVFFMFTLANPMSLLLLLLIMSLCAVLWLGSIMSSWFAYILFIVYIGGILVLFIYVCMISSNYITGLYKYKTLLYVGMVVALMS</sequence>
<feature type="chain" id="PRO_0000118234" description="NADH-ubiquinone oxidoreductase chain 6">
    <location>
        <begin position="1"/>
        <end position="96" status="greater than"/>
    </location>
</feature>
<feature type="transmembrane region" description="Helical" evidence="2">
    <location>
        <begin position="24"/>
        <end position="44"/>
    </location>
</feature>
<feature type="transmembrane region" description="Helical" evidence="2">
    <location>
        <begin position="48"/>
        <end position="68"/>
    </location>
</feature>
<feature type="non-terminal residue">
    <location>
        <position position="96"/>
    </location>
</feature>
<protein>
    <recommendedName>
        <fullName>NADH-ubiquinone oxidoreductase chain 6</fullName>
        <ecNumber>7.1.1.2</ecNumber>
    </recommendedName>
    <alternativeName>
        <fullName>NADH dehydrogenase subunit 6</fullName>
    </alternativeName>
</protein>
<reference key="1">
    <citation type="journal article" date="1994" name="J. Mol. Evol.">
        <title>Novel features of metazoan mtDNA revealed from sequence analysis of three mitochondrial DNA segments of the land snail Albinaria turrita (Gastropoda: Clausiliidae).</title>
        <authorList>
            <person name="Lecanidou R."/>
            <person name="Douris V."/>
            <person name="Rodakis G.C."/>
        </authorList>
    </citation>
    <scope>NUCLEOTIDE SEQUENCE [GENOMIC DNA]</scope>
</reference>
<comment type="function">
    <text evidence="1">Core subunit of the mitochondrial membrane respiratory chain NADH dehydrogenase (Complex I) that is believed to belong to the minimal assembly required for catalysis. Complex I functions in the transfer of electrons from NADH to the respiratory chain. The immediate electron acceptor for the enzyme is believed to be ubiquinone (By similarity).</text>
</comment>
<comment type="catalytic activity">
    <reaction>
        <text>a ubiquinone + NADH + 5 H(+)(in) = a ubiquinol + NAD(+) + 4 H(+)(out)</text>
        <dbReference type="Rhea" id="RHEA:29091"/>
        <dbReference type="Rhea" id="RHEA-COMP:9565"/>
        <dbReference type="Rhea" id="RHEA-COMP:9566"/>
        <dbReference type="ChEBI" id="CHEBI:15378"/>
        <dbReference type="ChEBI" id="CHEBI:16389"/>
        <dbReference type="ChEBI" id="CHEBI:17976"/>
        <dbReference type="ChEBI" id="CHEBI:57540"/>
        <dbReference type="ChEBI" id="CHEBI:57945"/>
        <dbReference type="EC" id="7.1.1.2"/>
    </reaction>
</comment>
<comment type="subcellular location">
    <subcellularLocation>
        <location evidence="3">Mitochondrion membrane</location>
        <topology evidence="3">Multi-pass membrane protein</topology>
    </subcellularLocation>
</comment>
<comment type="similarity">
    <text evidence="3">Belongs to the complex I subunit 6 family.</text>
</comment>